<proteinExistence type="inferred from homology"/>
<organism>
    <name type="scientific">Synechococcus sp. (strain ATCC 27144 / PCC 6301 / SAUG 1402/1)</name>
    <name type="common">Anacystis nidulans</name>
    <dbReference type="NCBI Taxonomy" id="269084"/>
    <lineage>
        <taxon>Bacteria</taxon>
        <taxon>Bacillati</taxon>
        <taxon>Cyanobacteriota</taxon>
        <taxon>Cyanophyceae</taxon>
        <taxon>Synechococcales</taxon>
        <taxon>Synechococcaceae</taxon>
        <taxon>Synechococcus</taxon>
    </lineage>
</organism>
<reference key="1">
    <citation type="journal article" date="2007" name="Photosyn. Res.">
        <title>Complete nucleotide sequence of the freshwater unicellular cyanobacterium Synechococcus elongatus PCC 6301 chromosome: gene content and organization.</title>
        <authorList>
            <person name="Sugita C."/>
            <person name="Ogata K."/>
            <person name="Shikata M."/>
            <person name="Jikuya H."/>
            <person name="Takano J."/>
            <person name="Furumichi M."/>
            <person name="Kanehisa M."/>
            <person name="Omata T."/>
            <person name="Sugiura M."/>
            <person name="Sugita M."/>
        </authorList>
    </citation>
    <scope>NUCLEOTIDE SEQUENCE [LARGE SCALE GENOMIC DNA]</scope>
    <source>
        <strain>ATCC 27144 / PCC 6301 / SAUG 1402/1</strain>
    </source>
</reference>
<evidence type="ECO:0000255" key="1">
    <source>
        <dbReference type="HAMAP-Rule" id="MF_00600"/>
    </source>
</evidence>
<protein>
    <recommendedName>
        <fullName evidence="1">Chaperonin GroEL 2</fullName>
        <ecNumber evidence="1">5.6.1.7</ecNumber>
    </recommendedName>
    <alternativeName>
        <fullName evidence="1">60 kDa chaperonin 2</fullName>
    </alternativeName>
    <alternativeName>
        <fullName evidence="1">Chaperonin-60 2</fullName>
        <shortName evidence="1">Cpn60 2</shortName>
    </alternativeName>
</protein>
<dbReference type="EC" id="5.6.1.7" evidence="1"/>
<dbReference type="EMBL" id="AP008231">
    <property type="protein sequence ID" value="BAD79034.1"/>
    <property type="molecule type" value="Genomic_DNA"/>
</dbReference>
<dbReference type="SMR" id="Q5N3T6"/>
<dbReference type="KEGG" id="syc:syc0844_c"/>
<dbReference type="eggNOG" id="COG0459">
    <property type="taxonomic scope" value="Bacteria"/>
</dbReference>
<dbReference type="Proteomes" id="UP000001175">
    <property type="component" value="Chromosome"/>
</dbReference>
<dbReference type="GO" id="GO:0005737">
    <property type="term" value="C:cytoplasm"/>
    <property type="evidence" value="ECO:0007669"/>
    <property type="project" value="UniProtKB-SubCell"/>
</dbReference>
<dbReference type="GO" id="GO:0005524">
    <property type="term" value="F:ATP binding"/>
    <property type="evidence" value="ECO:0007669"/>
    <property type="project" value="UniProtKB-UniRule"/>
</dbReference>
<dbReference type="GO" id="GO:0140662">
    <property type="term" value="F:ATP-dependent protein folding chaperone"/>
    <property type="evidence" value="ECO:0007669"/>
    <property type="project" value="InterPro"/>
</dbReference>
<dbReference type="GO" id="GO:0016853">
    <property type="term" value="F:isomerase activity"/>
    <property type="evidence" value="ECO:0007669"/>
    <property type="project" value="UniProtKB-KW"/>
</dbReference>
<dbReference type="GO" id="GO:0051082">
    <property type="term" value="F:unfolded protein binding"/>
    <property type="evidence" value="ECO:0007669"/>
    <property type="project" value="UniProtKB-UniRule"/>
</dbReference>
<dbReference type="GO" id="GO:0042026">
    <property type="term" value="P:protein refolding"/>
    <property type="evidence" value="ECO:0007669"/>
    <property type="project" value="UniProtKB-UniRule"/>
</dbReference>
<dbReference type="CDD" id="cd03344">
    <property type="entry name" value="GroEL"/>
    <property type="match status" value="1"/>
</dbReference>
<dbReference type="FunFam" id="3.50.7.10:FF:000001">
    <property type="entry name" value="60 kDa chaperonin"/>
    <property type="match status" value="1"/>
</dbReference>
<dbReference type="Gene3D" id="3.50.7.10">
    <property type="entry name" value="GroEL"/>
    <property type="match status" value="1"/>
</dbReference>
<dbReference type="Gene3D" id="1.10.560.10">
    <property type="entry name" value="GroEL-like equatorial domain"/>
    <property type="match status" value="1"/>
</dbReference>
<dbReference type="Gene3D" id="3.30.260.10">
    <property type="entry name" value="TCP-1-like chaperonin intermediate domain"/>
    <property type="match status" value="1"/>
</dbReference>
<dbReference type="HAMAP" id="MF_00600">
    <property type="entry name" value="CH60"/>
    <property type="match status" value="1"/>
</dbReference>
<dbReference type="InterPro" id="IPR018370">
    <property type="entry name" value="Chaperonin_Cpn60_CS"/>
</dbReference>
<dbReference type="InterPro" id="IPR001844">
    <property type="entry name" value="Cpn60/GroEL"/>
</dbReference>
<dbReference type="InterPro" id="IPR002423">
    <property type="entry name" value="Cpn60/GroEL/TCP-1"/>
</dbReference>
<dbReference type="InterPro" id="IPR027409">
    <property type="entry name" value="GroEL-like_apical_dom_sf"/>
</dbReference>
<dbReference type="InterPro" id="IPR027413">
    <property type="entry name" value="GROEL-like_equatorial_sf"/>
</dbReference>
<dbReference type="InterPro" id="IPR027410">
    <property type="entry name" value="TCP-1-like_intermed_sf"/>
</dbReference>
<dbReference type="NCBIfam" id="TIGR02348">
    <property type="entry name" value="GroEL"/>
    <property type="match status" value="1"/>
</dbReference>
<dbReference type="NCBIfam" id="NF000592">
    <property type="entry name" value="PRK00013.1"/>
    <property type="match status" value="1"/>
</dbReference>
<dbReference type="NCBIfam" id="NF009487">
    <property type="entry name" value="PRK12849.1"/>
    <property type="match status" value="1"/>
</dbReference>
<dbReference type="NCBIfam" id="NF009488">
    <property type="entry name" value="PRK12850.1"/>
    <property type="match status" value="1"/>
</dbReference>
<dbReference type="NCBIfam" id="NF009489">
    <property type="entry name" value="PRK12851.1"/>
    <property type="match status" value="1"/>
</dbReference>
<dbReference type="PANTHER" id="PTHR45633">
    <property type="entry name" value="60 KDA HEAT SHOCK PROTEIN, MITOCHONDRIAL"/>
    <property type="match status" value="1"/>
</dbReference>
<dbReference type="Pfam" id="PF00118">
    <property type="entry name" value="Cpn60_TCP1"/>
    <property type="match status" value="1"/>
</dbReference>
<dbReference type="PRINTS" id="PR00298">
    <property type="entry name" value="CHAPERONIN60"/>
</dbReference>
<dbReference type="SUPFAM" id="SSF52029">
    <property type="entry name" value="GroEL apical domain-like"/>
    <property type="match status" value="1"/>
</dbReference>
<dbReference type="SUPFAM" id="SSF48592">
    <property type="entry name" value="GroEL equatorial domain-like"/>
    <property type="match status" value="1"/>
</dbReference>
<dbReference type="SUPFAM" id="SSF54849">
    <property type="entry name" value="GroEL-intermediate domain like"/>
    <property type="match status" value="1"/>
</dbReference>
<dbReference type="PROSITE" id="PS00296">
    <property type="entry name" value="CHAPERONINS_CPN60"/>
    <property type="match status" value="1"/>
</dbReference>
<comment type="function">
    <text evidence="1">Together with its co-chaperonin GroES, plays an essential role in assisting protein folding. The GroEL-GroES system forms a nano-cage that allows encapsulation of the non-native substrate proteins and provides a physical environment optimized to promote and accelerate protein folding.</text>
</comment>
<comment type="catalytic activity">
    <reaction evidence="1">
        <text>ATP + H2O + a folded polypeptide = ADP + phosphate + an unfolded polypeptide.</text>
        <dbReference type="EC" id="5.6.1.7"/>
    </reaction>
</comment>
<comment type="subunit">
    <text evidence="1">Forms a cylinder of 14 subunits composed of two heptameric rings stacked back-to-back. Interacts with the co-chaperonin GroES.</text>
</comment>
<comment type="subcellular location">
    <subcellularLocation>
        <location evidence="1">Cytoplasm</location>
    </subcellularLocation>
</comment>
<comment type="similarity">
    <text evidence="1">Belongs to the chaperonin (HSP60) family.</text>
</comment>
<sequence length="555" mass="58185">MAKLILFHEDSRQALERGVNALANAVKVTLGPRGRNVLLEKKFGAPEIINDGVSIAKEIELEDPHENAGARLVQEVAAKTKEIAGDGTTTATVLAQAIVREGLTNVAAGANPIVLRRGIEKAVATLVEAIAAKAQPVADEAAIRSIAAVSAGNDDEVGQMIADAVAKVTKDGVITVEESKSLATELEVVEGMQFDRGYLSPYFVTDQDRQVVEYDNPLILLTDKKIASIQDLVPVLEDVARAGRPLLIIAEDIEGEALATLVVNKARGVLNTVAVKAPAFGDRRKAILQDIAVLTGGQVISEEVGLSLADANSSVLGKAQKITISKDTTIIVAGDENKADVAARIAQIRRSLEETDSDYDREKLQERIAKLAGGVAVIKVGAPTETELKNRKLRIEDALNATRAAIEEGVVPGGGTTLLHLASALTSLQASLTVADEKLGVEIVARALEAPLRQIADNAGAEGSVVVEKLRDKDFNFGYNALTGQYEDLVASGILDPAKVVRSALQDAASVASLILTTEVLVVDQPEPEPAMPAGGDMGGMGGMGMPGMGGMGMM</sequence>
<name>CH602_SYNP6</name>
<accession>Q5N3T6</accession>
<gene>
    <name evidence="1" type="primary">groEL2</name>
    <name evidence="1" type="synonym">groL2</name>
    <name type="ordered locus">syc0844_c</name>
</gene>
<feature type="chain" id="PRO_0000063568" description="Chaperonin GroEL 2">
    <location>
        <begin position="1"/>
        <end position="555"/>
    </location>
</feature>
<feature type="binding site" evidence="1">
    <location>
        <begin position="29"/>
        <end position="32"/>
    </location>
    <ligand>
        <name>ATP</name>
        <dbReference type="ChEBI" id="CHEBI:30616"/>
    </ligand>
</feature>
<feature type="binding site" evidence="1">
    <location>
        <begin position="86"/>
        <end position="90"/>
    </location>
    <ligand>
        <name>ATP</name>
        <dbReference type="ChEBI" id="CHEBI:30616"/>
    </ligand>
</feature>
<feature type="binding site" evidence="1">
    <location>
        <position position="414"/>
    </location>
    <ligand>
        <name>ATP</name>
        <dbReference type="ChEBI" id="CHEBI:30616"/>
    </ligand>
</feature>
<feature type="binding site" evidence="1">
    <location>
        <begin position="480"/>
        <end position="482"/>
    </location>
    <ligand>
        <name>ATP</name>
        <dbReference type="ChEBI" id="CHEBI:30616"/>
    </ligand>
</feature>
<feature type="binding site" evidence="1">
    <location>
        <position position="496"/>
    </location>
    <ligand>
        <name>ATP</name>
        <dbReference type="ChEBI" id="CHEBI:30616"/>
    </ligand>
</feature>
<keyword id="KW-0067">ATP-binding</keyword>
<keyword id="KW-0143">Chaperone</keyword>
<keyword id="KW-0963">Cytoplasm</keyword>
<keyword id="KW-0413">Isomerase</keyword>
<keyword id="KW-0547">Nucleotide-binding</keyword>